<sequence length="93" mass="10405">MSRSIKKGPFADASLLKKVDAQADADKKQVIKTWSRRSTIFPSFVGLTIAVYDGRKHVPVYITEDMVGHKLGEFVPTRTFHGHKSTEDKTTAK</sequence>
<reference key="1">
    <citation type="journal article" date="2008" name="J. Bacteriol.">
        <title>Genome sequence of Lactobacillus helveticus: an organism distinguished by selective gene loss and IS element expansion.</title>
        <authorList>
            <person name="Callanan M."/>
            <person name="Kaleta P."/>
            <person name="O'Callaghan J."/>
            <person name="O'Sullivan O."/>
            <person name="Jordan K."/>
            <person name="McAuliffe O."/>
            <person name="Sangrador-Vegas A."/>
            <person name="Slattery L."/>
            <person name="Fitzgerald G.F."/>
            <person name="Beresford T."/>
            <person name="Ross R.P."/>
        </authorList>
    </citation>
    <scope>NUCLEOTIDE SEQUENCE [LARGE SCALE GENOMIC DNA]</scope>
    <source>
        <strain>DPC 4571</strain>
    </source>
</reference>
<protein>
    <recommendedName>
        <fullName evidence="1">Small ribosomal subunit protein uS19</fullName>
    </recommendedName>
    <alternativeName>
        <fullName evidence="2">30S ribosomal protein S19</fullName>
    </alternativeName>
</protein>
<name>RS19_LACH4</name>
<dbReference type="EMBL" id="CP000517">
    <property type="protein sequence ID" value="ABX26540.1"/>
    <property type="molecule type" value="Genomic_DNA"/>
</dbReference>
<dbReference type="RefSeq" id="WP_003625786.1">
    <property type="nucleotide sequence ID" value="NC_010080.1"/>
</dbReference>
<dbReference type="SMR" id="A8YXK9"/>
<dbReference type="KEGG" id="lhe:lhv_0316"/>
<dbReference type="eggNOG" id="COG0185">
    <property type="taxonomic scope" value="Bacteria"/>
</dbReference>
<dbReference type="HOGENOM" id="CLU_144911_0_1_9"/>
<dbReference type="Proteomes" id="UP000000790">
    <property type="component" value="Chromosome"/>
</dbReference>
<dbReference type="GO" id="GO:0005737">
    <property type="term" value="C:cytoplasm"/>
    <property type="evidence" value="ECO:0007669"/>
    <property type="project" value="UniProtKB-ARBA"/>
</dbReference>
<dbReference type="GO" id="GO:0015935">
    <property type="term" value="C:small ribosomal subunit"/>
    <property type="evidence" value="ECO:0007669"/>
    <property type="project" value="InterPro"/>
</dbReference>
<dbReference type="GO" id="GO:0019843">
    <property type="term" value="F:rRNA binding"/>
    <property type="evidence" value="ECO:0007669"/>
    <property type="project" value="UniProtKB-UniRule"/>
</dbReference>
<dbReference type="GO" id="GO:0003735">
    <property type="term" value="F:structural constituent of ribosome"/>
    <property type="evidence" value="ECO:0007669"/>
    <property type="project" value="InterPro"/>
</dbReference>
<dbReference type="GO" id="GO:0000028">
    <property type="term" value="P:ribosomal small subunit assembly"/>
    <property type="evidence" value="ECO:0007669"/>
    <property type="project" value="TreeGrafter"/>
</dbReference>
<dbReference type="GO" id="GO:0006412">
    <property type="term" value="P:translation"/>
    <property type="evidence" value="ECO:0007669"/>
    <property type="project" value="UniProtKB-UniRule"/>
</dbReference>
<dbReference type="FunFam" id="3.30.860.10:FF:000001">
    <property type="entry name" value="30S ribosomal protein S19"/>
    <property type="match status" value="1"/>
</dbReference>
<dbReference type="Gene3D" id="3.30.860.10">
    <property type="entry name" value="30s Ribosomal Protein S19, Chain A"/>
    <property type="match status" value="1"/>
</dbReference>
<dbReference type="HAMAP" id="MF_00531">
    <property type="entry name" value="Ribosomal_uS19"/>
    <property type="match status" value="1"/>
</dbReference>
<dbReference type="InterPro" id="IPR002222">
    <property type="entry name" value="Ribosomal_uS19"/>
</dbReference>
<dbReference type="InterPro" id="IPR005732">
    <property type="entry name" value="Ribosomal_uS19_bac-type"/>
</dbReference>
<dbReference type="InterPro" id="IPR020934">
    <property type="entry name" value="Ribosomal_uS19_CS"/>
</dbReference>
<dbReference type="InterPro" id="IPR023575">
    <property type="entry name" value="Ribosomal_uS19_SF"/>
</dbReference>
<dbReference type="NCBIfam" id="TIGR01050">
    <property type="entry name" value="rpsS_bact"/>
    <property type="match status" value="1"/>
</dbReference>
<dbReference type="PANTHER" id="PTHR11880">
    <property type="entry name" value="RIBOSOMAL PROTEIN S19P FAMILY MEMBER"/>
    <property type="match status" value="1"/>
</dbReference>
<dbReference type="PANTHER" id="PTHR11880:SF8">
    <property type="entry name" value="SMALL RIBOSOMAL SUBUNIT PROTEIN US19M"/>
    <property type="match status" value="1"/>
</dbReference>
<dbReference type="Pfam" id="PF00203">
    <property type="entry name" value="Ribosomal_S19"/>
    <property type="match status" value="1"/>
</dbReference>
<dbReference type="PIRSF" id="PIRSF002144">
    <property type="entry name" value="Ribosomal_S19"/>
    <property type="match status" value="1"/>
</dbReference>
<dbReference type="PRINTS" id="PR00975">
    <property type="entry name" value="RIBOSOMALS19"/>
</dbReference>
<dbReference type="SUPFAM" id="SSF54570">
    <property type="entry name" value="Ribosomal protein S19"/>
    <property type="match status" value="1"/>
</dbReference>
<dbReference type="PROSITE" id="PS00323">
    <property type="entry name" value="RIBOSOMAL_S19"/>
    <property type="match status" value="1"/>
</dbReference>
<comment type="function">
    <text evidence="1">Protein S19 forms a complex with S13 that binds strongly to the 16S ribosomal RNA.</text>
</comment>
<comment type="similarity">
    <text evidence="1">Belongs to the universal ribosomal protein uS19 family.</text>
</comment>
<proteinExistence type="inferred from homology"/>
<evidence type="ECO:0000255" key="1">
    <source>
        <dbReference type="HAMAP-Rule" id="MF_00531"/>
    </source>
</evidence>
<evidence type="ECO:0000305" key="2"/>
<feature type="chain" id="PRO_1000072509" description="Small ribosomal subunit protein uS19">
    <location>
        <begin position="1"/>
        <end position="93"/>
    </location>
</feature>
<accession>A8YXK9</accession>
<organism>
    <name type="scientific">Lactobacillus helveticus (strain DPC 4571)</name>
    <dbReference type="NCBI Taxonomy" id="405566"/>
    <lineage>
        <taxon>Bacteria</taxon>
        <taxon>Bacillati</taxon>
        <taxon>Bacillota</taxon>
        <taxon>Bacilli</taxon>
        <taxon>Lactobacillales</taxon>
        <taxon>Lactobacillaceae</taxon>
        <taxon>Lactobacillus</taxon>
    </lineage>
</organism>
<gene>
    <name evidence="1" type="primary">rpsS</name>
    <name type="ordered locus">lhv_0316</name>
</gene>
<keyword id="KW-0687">Ribonucleoprotein</keyword>
<keyword id="KW-0689">Ribosomal protein</keyword>
<keyword id="KW-0694">RNA-binding</keyword>
<keyword id="KW-0699">rRNA-binding</keyword>